<sequence>MATQLDVQTLRSVFQSRPDILSNIERNADTPARTTLFNEIASFVYERLGSADPEDGPASKRRRIDIAQLPTHPQPNGHAHGRAPPAGLSVDVAATDPVLLELRDISVTAPQRKKYDLCFTKNFLYARASGTSVPVQGVVYPLKDIEHAFYLPVPDKSQAQYNYVLLPRDSYLPTAKQAGANSGGGLQPLEPLVFTVPAAAPKPGSVVGPSSAAAEAVSDTYSSLLHWALTTSMRSAGNHSCQLVASDPKLFHSVARQPHRPNEKAVHVKAFRGSKDGFLFFLPTGILWGFKKPILFLPLDRIVAVSYTNVLRTTFNIVVELDTDIPGEANIAIEKEIEFGMIDQEDYGGIDETYVRRHGLADRSMAEQRKAKRELVENIKKPAAGDELAGGEGDADGLTALERAQREAEQQLQDEEDEMEEDYDPGSEGDSEGEGGSSGEDDDDDEAQGDYDDEEDDEAEGLEN</sequence>
<name>RT106_CHAGB</name>
<feature type="chain" id="PRO_0000320489" description="Histone chaperone RTT106">
    <location>
        <begin position="1"/>
        <end position="464"/>
    </location>
</feature>
<feature type="region of interest" description="Disordered" evidence="2">
    <location>
        <begin position="382"/>
        <end position="464"/>
    </location>
</feature>
<feature type="compositionally biased region" description="Acidic residues" evidence="2">
    <location>
        <begin position="412"/>
        <end position="464"/>
    </location>
</feature>
<protein>
    <recommendedName>
        <fullName>Histone chaperone RTT106</fullName>
    </recommendedName>
</protein>
<evidence type="ECO:0000250" key="1"/>
<evidence type="ECO:0000256" key="2">
    <source>
        <dbReference type="SAM" id="MobiDB-lite"/>
    </source>
</evidence>
<evidence type="ECO:0000305" key="3"/>
<accession>Q2H3D0</accession>
<proteinExistence type="inferred from homology"/>
<comment type="function">
    <text evidence="1">Histones H3 and H4 chaperone involved in the nucleosome formation and heterochromatin silencing. Required for the deposition of H3K56ac-carrying H3-H4 complex onto newly-replicated DNA. Plays a role in the transcriptional regulation of the cell-cycle dependent histone genes by creating a repressive structure at the core histone gene promoter (By similarity).</text>
</comment>
<comment type="subunit">
    <text evidence="1">Interacts with histones H3 and H4.</text>
</comment>
<comment type="subcellular location">
    <subcellularLocation>
        <location evidence="1">Nucleus</location>
    </subcellularLocation>
    <subcellularLocation>
        <location evidence="1">Chromosome</location>
    </subcellularLocation>
</comment>
<comment type="similarity">
    <text evidence="3">Belongs to the RTT106 family.</text>
</comment>
<organism>
    <name type="scientific">Chaetomium globosum (strain ATCC 6205 / CBS 148.51 / DSM 1962 / NBRC 6347 / NRRL 1970)</name>
    <name type="common">Soil fungus</name>
    <dbReference type="NCBI Taxonomy" id="306901"/>
    <lineage>
        <taxon>Eukaryota</taxon>
        <taxon>Fungi</taxon>
        <taxon>Dikarya</taxon>
        <taxon>Ascomycota</taxon>
        <taxon>Pezizomycotina</taxon>
        <taxon>Sordariomycetes</taxon>
        <taxon>Sordariomycetidae</taxon>
        <taxon>Sordariales</taxon>
        <taxon>Chaetomiaceae</taxon>
        <taxon>Chaetomium</taxon>
    </lineage>
</organism>
<keyword id="KW-0143">Chaperone</keyword>
<keyword id="KW-0158">Chromosome</keyword>
<keyword id="KW-0238">DNA-binding</keyword>
<keyword id="KW-0539">Nucleus</keyword>
<keyword id="KW-1185">Reference proteome</keyword>
<keyword id="KW-0804">Transcription</keyword>
<keyword id="KW-0805">Transcription regulation</keyword>
<dbReference type="EMBL" id="CH408032">
    <property type="protein sequence ID" value="EAQ87097.1"/>
    <property type="molecule type" value="Genomic_DNA"/>
</dbReference>
<dbReference type="RefSeq" id="XP_001222930.1">
    <property type="nucleotide sequence ID" value="XM_001222929.1"/>
</dbReference>
<dbReference type="SMR" id="Q2H3D0"/>
<dbReference type="FunCoup" id="Q2H3D0">
    <property type="interactions" value="97"/>
</dbReference>
<dbReference type="STRING" id="306901.Q2H3D0"/>
<dbReference type="GeneID" id="4391768"/>
<dbReference type="VEuPathDB" id="FungiDB:CHGG_03716"/>
<dbReference type="eggNOG" id="ENOG502R9PE">
    <property type="taxonomic scope" value="Eukaryota"/>
</dbReference>
<dbReference type="HOGENOM" id="CLU_033828_0_0_1"/>
<dbReference type="InParanoid" id="Q2H3D0"/>
<dbReference type="OMA" id="AMPEAHR"/>
<dbReference type="OrthoDB" id="75754at2759"/>
<dbReference type="Proteomes" id="UP000001056">
    <property type="component" value="Unassembled WGS sequence"/>
</dbReference>
<dbReference type="GO" id="GO:0005694">
    <property type="term" value="C:chromosome"/>
    <property type="evidence" value="ECO:0007669"/>
    <property type="project" value="UniProtKB-SubCell"/>
</dbReference>
<dbReference type="GO" id="GO:0005634">
    <property type="term" value="C:nucleus"/>
    <property type="evidence" value="ECO:0007669"/>
    <property type="project" value="UniProtKB-SubCell"/>
</dbReference>
<dbReference type="GO" id="GO:0003677">
    <property type="term" value="F:DNA binding"/>
    <property type="evidence" value="ECO:0007669"/>
    <property type="project" value="UniProtKB-KW"/>
</dbReference>
<dbReference type="GO" id="GO:0042393">
    <property type="term" value="F:histone binding"/>
    <property type="evidence" value="ECO:0007669"/>
    <property type="project" value="TreeGrafter"/>
</dbReference>
<dbReference type="GO" id="GO:0031491">
    <property type="term" value="F:nucleosome binding"/>
    <property type="evidence" value="ECO:0007669"/>
    <property type="project" value="TreeGrafter"/>
</dbReference>
<dbReference type="Gene3D" id="2.30.29.120">
    <property type="match status" value="1"/>
</dbReference>
<dbReference type="Gene3D" id="2.30.29.30">
    <property type="entry name" value="Pleckstrin-homology domain (PH domain)/Phosphotyrosine-binding domain (PTB)"/>
    <property type="match status" value="1"/>
</dbReference>
<dbReference type="InterPro" id="IPR011993">
    <property type="entry name" value="PH-like_dom_sf"/>
</dbReference>
<dbReference type="InterPro" id="IPR013719">
    <property type="entry name" value="RTT106/SPT16-like_middle_dom"/>
</dbReference>
<dbReference type="InterPro" id="IPR050454">
    <property type="entry name" value="RTT106/SSRP1_HistChap/FACT"/>
</dbReference>
<dbReference type="PANTHER" id="PTHR45849">
    <property type="entry name" value="FACT COMPLEX SUBUNIT SSRP1"/>
    <property type="match status" value="1"/>
</dbReference>
<dbReference type="PANTHER" id="PTHR45849:SF3">
    <property type="entry name" value="HISTONE CHAPERONE RTT106"/>
    <property type="match status" value="1"/>
</dbReference>
<dbReference type="Pfam" id="PF08512">
    <property type="entry name" value="Rttp106-like_middle"/>
    <property type="match status" value="1"/>
</dbReference>
<dbReference type="SMART" id="SM01287">
    <property type="entry name" value="Rtt106"/>
    <property type="match status" value="1"/>
</dbReference>
<dbReference type="SUPFAM" id="SSF50729">
    <property type="entry name" value="PH domain-like"/>
    <property type="match status" value="1"/>
</dbReference>
<reference key="1">
    <citation type="journal article" date="2015" name="Genome Announc.">
        <title>Draft genome sequence of the cellulolytic fungus Chaetomium globosum.</title>
        <authorList>
            <person name="Cuomo C.A."/>
            <person name="Untereiner W.A."/>
            <person name="Ma L.-J."/>
            <person name="Grabherr M."/>
            <person name="Birren B.W."/>
        </authorList>
    </citation>
    <scope>NUCLEOTIDE SEQUENCE [LARGE SCALE GENOMIC DNA]</scope>
    <source>
        <strain>ATCC 6205 / CBS 148.51 / DSM 1962 / NBRC 6347 / NRRL 1970</strain>
    </source>
</reference>
<gene>
    <name type="primary">RTT106</name>
    <name type="ORF">CHGG_03716</name>
</gene>